<gene>
    <name type="primary">RFTN1</name>
</gene>
<feature type="initiator methionine" description="Removed" evidence="1">
    <location>
        <position position="1"/>
    </location>
</feature>
<feature type="chain" id="PRO_0000251955" description="Raftlin">
    <location>
        <begin position="2"/>
        <end position="602"/>
    </location>
</feature>
<feature type="region of interest" description="Disordered" evidence="2">
    <location>
        <begin position="178"/>
        <end position="282"/>
    </location>
</feature>
<feature type="region of interest" description="Disordered" evidence="2">
    <location>
        <begin position="451"/>
        <end position="495"/>
    </location>
</feature>
<feature type="region of interest" description="Disordered" evidence="2">
    <location>
        <begin position="524"/>
        <end position="567"/>
    </location>
</feature>
<feature type="compositionally biased region" description="Polar residues" evidence="2">
    <location>
        <begin position="178"/>
        <end position="195"/>
    </location>
</feature>
<feature type="compositionally biased region" description="Basic and acidic residues" evidence="2">
    <location>
        <begin position="197"/>
        <end position="209"/>
    </location>
</feature>
<feature type="compositionally biased region" description="Basic and acidic residues" evidence="2">
    <location>
        <begin position="244"/>
        <end position="265"/>
    </location>
</feature>
<feature type="compositionally biased region" description="Basic residues" evidence="2">
    <location>
        <begin position="468"/>
        <end position="477"/>
    </location>
</feature>
<feature type="lipid moiety-binding region" description="N-myristoyl glycine" evidence="1">
    <location>
        <position position="2"/>
    </location>
</feature>
<feature type="lipid moiety-binding region" description="S-palmitoyl cysteine" evidence="1">
    <location>
        <position position="3"/>
    </location>
</feature>
<reference key="1">
    <citation type="journal article" date="2003" name="EMBO J.">
        <title>The B cell-specific major raft protein, Raftlin, is necessary for the integrity of lipid raft and BCR signal transduction.</title>
        <authorList>
            <person name="Saeki K."/>
            <person name="Miura Y."/>
            <person name="Aki D."/>
            <person name="Kurosaki T."/>
            <person name="Yoshimura A."/>
        </authorList>
    </citation>
    <scope>NUCLEOTIDE SEQUENCE [MRNA]</scope>
    <scope>FUNCTION</scope>
</reference>
<protein>
    <recommendedName>
        <fullName>Raftlin</fullName>
    </recommendedName>
    <alternativeName>
        <fullName>Raft-linking protein</fullName>
    </alternativeName>
</protein>
<organism>
    <name type="scientific">Gallus gallus</name>
    <name type="common">Chicken</name>
    <dbReference type="NCBI Taxonomy" id="9031"/>
    <lineage>
        <taxon>Eukaryota</taxon>
        <taxon>Metazoa</taxon>
        <taxon>Chordata</taxon>
        <taxon>Craniata</taxon>
        <taxon>Vertebrata</taxon>
        <taxon>Euteleostomi</taxon>
        <taxon>Archelosauria</taxon>
        <taxon>Archosauria</taxon>
        <taxon>Dinosauria</taxon>
        <taxon>Saurischia</taxon>
        <taxon>Theropoda</taxon>
        <taxon>Coelurosauria</taxon>
        <taxon>Aves</taxon>
        <taxon>Neognathae</taxon>
        <taxon>Galloanserae</taxon>
        <taxon>Galliformes</taxon>
        <taxon>Phasianidae</taxon>
        <taxon>Phasianinae</taxon>
        <taxon>Gallus</taxon>
    </lineage>
</organism>
<name>RFTN1_CHICK</name>
<keyword id="KW-1003">Cell membrane</keyword>
<keyword id="KW-0449">Lipoprotein</keyword>
<keyword id="KW-0472">Membrane</keyword>
<keyword id="KW-0519">Myristate</keyword>
<keyword id="KW-0564">Palmitate</keyword>
<keyword id="KW-1185">Reference proteome</keyword>
<accession>Q7SZI5</accession>
<sequence length="602" mass="65696">MGCGLNKLEKHDEKRPGNIYSTLKRPQVETKIDVSYEYRFLDFTTLNDAELPGSSAIKLSSLRDLPAQLQELYQQGFVLAAVHPFVQPTDEKEKTPQEQIFRAVLIKKTERSPKGGIHSEGYILEVECCSSVNQLSDKKEIPDFIKKIQDAASQGLKFVGIIPQYHSQKNCLVSSSLTPASNNSVQSRDNKNVSNCPEDHASLDGEKIDGINGCSTPAPGEENADQCATSREGRKGEGQAAEEPDCKSAKGSKEQHEHPGGREAPDTQNGVAENETPARCSKPLTDKTEIFTLFNKPKTPQRCSQYYTVTIPMRISRNGQTVNSLEANWLEHMTDHFRKGGSLVNAIFSLGMVNDSLHGTMDGVFLFEDVAVEDNKTTQGYDAIVVEQWTVLKGVEVQTDYVPLLNSLAIYGWQLTCVLPTPIVKTNREGNLSTKQIVFLQRPSLPQKAKKKESKFHWRFSKEDMHNKPMKKSRKTKLSSGEKQTAEKQEFEVTENTRNLAAQLSAASGPGPEQQLDSVINLGNETAGADSRGTLHDGVSEGTCPASADAGDTGGSEVQACPNQSAPNCCEEQEAAGQDCALGPDSCQGIDGAAADVEPSCE</sequence>
<proteinExistence type="evidence at transcript level"/>
<comment type="function">
    <text evidence="3">May play a pivotal role in the formation and/or maintenance of lipid rafts. May regulate B-cell antigen receptor-mediated signaling.</text>
</comment>
<comment type="subcellular location">
    <subcellularLocation>
        <location evidence="1">Cell membrane</location>
        <topology evidence="1">Lipid-anchor</topology>
    </subcellularLocation>
    <text evidence="1">Associates with lipid rafts.</text>
</comment>
<comment type="similarity">
    <text evidence="4">Belongs to the raftlin family.</text>
</comment>
<evidence type="ECO:0000250" key="1"/>
<evidence type="ECO:0000256" key="2">
    <source>
        <dbReference type="SAM" id="MobiDB-lite"/>
    </source>
</evidence>
<evidence type="ECO:0000269" key="3">
    <source>
    </source>
</evidence>
<evidence type="ECO:0000305" key="4"/>
<dbReference type="EMBL" id="AB092511">
    <property type="protein sequence ID" value="BAC78491.1"/>
    <property type="molecule type" value="mRNA"/>
</dbReference>
<dbReference type="RefSeq" id="NP_989789.1">
    <property type="nucleotide sequence ID" value="NM_204458.2"/>
</dbReference>
<dbReference type="FunCoup" id="Q7SZI5">
    <property type="interactions" value="628"/>
</dbReference>
<dbReference type="STRING" id="9031.ENSGALP00000018309"/>
<dbReference type="PaxDb" id="9031-ENSGALP00000043108"/>
<dbReference type="GeneID" id="395109"/>
<dbReference type="KEGG" id="gga:395109"/>
<dbReference type="CTD" id="23180"/>
<dbReference type="VEuPathDB" id="HostDB:geneid_395109"/>
<dbReference type="eggNOG" id="ENOG502QVP2">
    <property type="taxonomic scope" value="Eukaryota"/>
</dbReference>
<dbReference type="InParanoid" id="Q7SZI5"/>
<dbReference type="OMA" id="CPEDHAS"/>
<dbReference type="OrthoDB" id="9942562at2759"/>
<dbReference type="PhylomeDB" id="Q7SZI5"/>
<dbReference type="PRO" id="PR:Q7SZI5"/>
<dbReference type="Proteomes" id="UP000000539">
    <property type="component" value="Unassembled WGS sequence"/>
</dbReference>
<dbReference type="GO" id="GO:0005886">
    <property type="term" value="C:plasma membrane"/>
    <property type="evidence" value="ECO:0007669"/>
    <property type="project" value="UniProtKB-SubCell"/>
</dbReference>
<dbReference type="InterPro" id="IPR028169">
    <property type="entry name" value="Raftlin"/>
</dbReference>
<dbReference type="PANTHER" id="PTHR17601:SF3">
    <property type="entry name" value="RAFTLIN"/>
    <property type="match status" value="1"/>
</dbReference>
<dbReference type="PANTHER" id="PTHR17601">
    <property type="entry name" value="RAFTLIN-RELATED"/>
    <property type="match status" value="1"/>
</dbReference>
<dbReference type="Pfam" id="PF15250">
    <property type="entry name" value="Raftlin"/>
    <property type="match status" value="1"/>
</dbReference>